<protein>
    <recommendedName>
        <fullName evidence="1">Neuraminidase</fullName>
        <ecNumber evidence="1">3.2.1.18</ecNumber>
    </recommendedName>
</protein>
<gene>
    <name evidence="1" type="primary">NA</name>
</gene>
<organismHost>
    <name type="scientific">Aves</name>
    <dbReference type="NCBI Taxonomy" id="8782"/>
</organismHost>
<organismHost>
    <name type="scientific">Homo sapiens</name>
    <name type="common">Human</name>
    <dbReference type="NCBI Taxonomy" id="9606"/>
</organismHost>
<reference key="1">
    <citation type="journal article" date="2004" name="Virology">
        <title>Genetic analysis of human H2N2 and early H3N2 influenza viruses, 1957-1972: evidence for genetic divergence and multiple reassortment events.</title>
        <authorList>
            <person name="Lindstrom S.E."/>
            <person name="Cox N.J."/>
            <person name="Klimov A."/>
        </authorList>
    </citation>
    <scope>NUCLEOTIDE SEQUENCE [GENOMIC RNA]</scope>
</reference>
<reference key="2">
    <citation type="journal article" date="2004" name="FEBS Lett.">
        <title>Evolutional analysis of human influenza A virus N2 neuraminidase genes based on the transition of the low-pH stability of sialidase activity.</title>
        <authorList>
            <person name="Suzuki T."/>
            <person name="Takahashi T."/>
            <person name="Saito T."/>
            <person name="Guo C.T."/>
            <person name="Hidari K.I.-P.J."/>
            <person name="Miyamoto D."/>
            <person name="Suzuki Y."/>
        </authorList>
    </citation>
    <scope>NUCLEOTIDE SEQUENCE [GENOMIC RNA]</scope>
</reference>
<reference key="3">
    <citation type="journal article" date="2004" name="Virus Res.">
        <title>Assembly and budding of influenza virus.</title>
        <authorList>
            <person name="Nayak D.P."/>
            <person name="Hui E.K."/>
            <person name="Barman S."/>
        </authorList>
    </citation>
    <scope>REVIEW</scope>
</reference>
<reference key="4">
    <citation type="journal article" date="2005" name="N. Engl. J. Med.">
        <title>Neuraminidase inhibitors for influenza.</title>
        <authorList>
            <person name="Moscona A."/>
        </authorList>
    </citation>
    <scope>REVIEW</scope>
</reference>
<reference key="5">
    <citation type="journal article" date="2005" name="Biol. Pharm. Bull.">
        <title>Sialobiology of influenza: molecular mechanism of host range variation of influenza viruses.</title>
        <authorList>
            <person name="Suzuki Y."/>
        </authorList>
    </citation>
    <scope>REVIEW</scope>
</reference>
<dbReference type="EC" id="3.2.1.18" evidence="1"/>
<dbReference type="EMBL" id="AY209895">
    <property type="protein sequence ID" value="AAO46211.1"/>
    <property type="molecule type" value="Genomic_RNA"/>
</dbReference>
<dbReference type="EMBL" id="AB124654">
    <property type="protein sequence ID" value="BAD16638.1"/>
    <property type="molecule type" value="Genomic_RNA"/>
</dbReference>
<dbReference type="SMR" id="Q6XUE4"/>
<dbReference type="BindingDB" id="Q6XUE4"/>
<dbReference type="CAZy" id="GH34">
    <property type="family name" value="Glycoside Hydrolase Family 34"/>
</dbReference>
<dbReference type="GlyCosmos" id="Q6XUE4">
    <property type="glycosylation" value="8 sites, No reported glycans"/>
</dbReference>
<dbReference type="SABIO-RK" id="Q6XUE4"/>
<dbReference type="PRO" id="PR:Q6XUE4"/>
<dbReference type="GO" id="GO:0020002">
    <property type="term" value="C:host cell plasma membrane"/>
    <property type="evidence" value="ECO:0007669"/>
    <property type="project" value="UniProtKB-SubCell"/>
</dbReference>
<dbReference type="GO" id="GO:0016020">
    <property type="term" value="C:membrane"/>
    <property type="evidence" value="ECO:0007669"/>
    <property type="project" value="UniProtKB-UniRule"/>
</dbReference>
<dbReference type="GO" id="GO:0055036">
    <property type="term" value="C:virion membrane"/>
    <property type="evidence" value="ECO:0007669"/>
    <property type="project" value="UniProtKB-SubCell"/>
</dbReference>
<dbReference type="GO" id="GO:0004308">
    <property type="term" value="F:exo-alpha-sialidase activity"/>
    <property type="evidence" value="ECO:0007669"/>
    <property type="project" value="UniProtKB-UniRule"/>
</dbReference>
<dbReference type="GO" id="GO:0046872">
    <property type="term" value="F:metal ion binding"/>
    <property type="evidence" value="ECO:0007669"/>
    <property type="project" value="UniProtKB-UniRule"/>
</dbReference>
<dbReference type="GO" id="GO:0005975">
    <property type="term" value="P:carbohydrate metabolic process"/>
    <property type="evidence" value="ECO:0007669"/>
    <property type="project" value="InterPro"/>
</dbReference>
<dbReference type="GO" id="GO:0046761">
    <property type="term" value="P:viral budding from plasma membrane"/>
    <property type="evidence" value="ECO:0007669"/>
    <property type="project" value="UniProtKB-UniRule"/>
</dbReference>
<dbReference type="CDD" id="cd15483">
    <property type="entry name" value="Influenza_NA"/>
    <property type="match status" value="1"/>
</dbReference>
<dbReference type="Gene3D" id="2.120.10.10">
    <property type="match status" value="1"/>
</dbReference>
<dbReference type="HAMAP" id="MF_04071">
    <property type="entry name" value="INFV_NRAM"/>
    <property type="match status" value="1"/>
</dbReference>
<dbReference type="InterPro" id="IPR001860">
    <property type="entry name" value="Glyco_hydro_34"/>
</dbReference>
<dbReference type="InterPro" id="IPR033654">
    <property type="entry name" value="Sialidase_Influenza_A/B"/>
</dbReference>
<dbReference type="InterPro" id="IPR036278">
    <property type="entry name" value="Sialidase_sf"/>
</dbReference>
<dbReference type="Pfam" id="PF00064">
    <property type="entry name" value="Neur"/>
    <property type="match status" value="1"/>
</dbReference>
<dbReference type="SUPFAM" id="SSF50939">
    <property type="entry name" value="Sialidases"/>
    <property type="match status" value="1"/>
</dbReference>
<feature type="chain" id="PRO_0000280150" description="Neuraminidase">
    <location>
        <begin position="1"/>
        <end position="469"/>
    </location>
</feature>
<feature type="topological domain" description="Intravirion" evidence="1">
    <location>
        <begin position="1"/>
        <end position="6"/>
    </location>
</feature>
<feature type="transmembrane region" description="Helical" evidence="1">
    <location>
        <begin position="7"/>
        <end position="29"/>
    </location>
</feature>
<feature type="topological domain" description="Virion surface" evidence="1">
    <location>
        <begin position="30"/>
        <end position="469"/>
    </location>
</feature>
<feature type="region of interest" description="Involved in apical transport and lipid raft association" evidence="1">
    <location>
        <begin position="11"/>
        <end position="33"/>
    </location>
</feature>
<feature type="region of interest" description="Hypervariable stalk region" evidence="1">
    <location>
        <begin position="36"/>
        <end position="88"/>
    </location>
</feature>
<feature type="region of interest" description="Head of neuraminidase" evidence="1">
    <location>
        <begin position="91"/>
        <end position="469"/>
    </location>
</feature>
<feature type="region of interest" description="Disordered" evidence="2">
    <location>
        <begin position="325"/>
        <end position="349"/>
    </location>
</feature>
<feature type="active site" description="Proton donor/acceptor" evidence="1">
    <location>
        <position position="151"/>
    </location>
</feature>
<feature type="active site" description="Nucleophile" evidence="1">
    <location>
        <position position="406"/>
    </location>
</feature>
<feature type="binding site" evidence="1">
    <location>
        <position position="118"/>
    </location>
    <ligand>
        <name>substrate</name>
    </ligand>
</feature>
<feature type="binding site" evidence="1">
    <location>
        <position position="152"/>
    </location>
    <ligand>
        <name>substrate</name>
    </ligand>
</feature>
<feature type="binding site" evidence="1">
    <location>
        <begin position="276"/>
        <end position="277"/>
    </location>
    <ligand>
        <name>substrate</name>
    </ligand>
</feature>
<feature type="binding site" evidence="1">
    <location>
        <position position="292"/>
    </location>
    <ligand>
        <name>substrate</name>
    </ligand>
</feature>
<feature type="binding site" evidence="1">
    <location>
        <position position="293"/>
    </location>
    <ligand>
        <name>Ca(2+)</name>
        <dbReference type="ChEBI" id="CHEBI:29108"/>
    </ligand>
</feature>
<feature type="binding site" evidence="1">
    <location>
        <position position="297"/>
    </location>
    <ligand>
        <name>Ca(2+)</name>
        <dbReference type="ChEBI" id="CHEBI:29108"/>
    </ligand>
</feature>
<feature type="binding site" evidence="1">
    <location>
        <position position="324"/>
    </location>
    <ligand>
        <name>Ca(2+)</name>
        <dbReference type="ChEBI" id="CHEBI:29108"/>
    </ligand>
</feature>
<feature type="binding site" evidence="1">
    <location>
        <position position="371"/>
    </location>
    <ligand>
        <name>substrate</name>
    </ligand>
</feature>
<feature type="glycosylation site" description="N-linked (GlcNAc...) asparagine; by host" evidence="1">
    <location>
        <position position="61"/>
    </location>
</feature>
<feature type="glycosylation site" description="N-linked (GlcNAc...) asparagine; by host" evidence="1">
    <location>
        <position position="69"/>
    </location>
</feature>
<feature type="glycosylation site" description="N-linked (GlcNAc...) asparagine; by host" evidence="1">
    <location>
        <position position="70"/>
    </location>
</feature>
<feature type="glycosylation site" description="N-linked (GlcNAc...) asparagine; by host" evidence="1">
    <location>
        <position position="86"/>
    </location>
</feature>
<feature type="glycosylation site" description="N-linked (GlcNAc...) asparagine; by host" evidence="1">
    <location>
        <position position="146"/>
    </location>
</feature>
<feature type="glycosylation site" description="N-linked (GlcNAc...) asparagine; by host" evidence="1">
    <location>
        <position position="200"/>
    </location>
</feature>
<feature type="glycosylation site" description="N-linked (GlcNAc...) asparagine; by host" evidence="1">
    <location>
        <position position="234"/>
    </location>
</feature>
<feature type="glycosylation site" description="N-linked (GlcNAc...) asparagine; by host" evidence="1">
    <location>
        <position position="402"/>
    </location>
</feature>
<feature type="disulfide bond" evidence="1">
    <location>
        <begin position="92"/>
        <end position="417"/>
    </location>
</feature>
<feature type="disulfide bond" evidence="1">
    <location>
        <begin position="124"/>
        <end position="129"/>
    </location>
</feature>
<feature type="disulfide bond" evidence="1">
    <location>
        <begin position="183"/>
        <end position="230"/>
    </location>
</feature>
<feature type="disulfide bond" evidence="1">
    <location>
        <begin position="232"/>
        <end position="237"/>
    </location>
</feature>
<feature type="disulfide bond" evidence="1">
    <location>
        <begin position="278"/>
        <end position="291"/>
    </location>
</feature>
<feature type="disulfide bond" evidence="1">
    <location>
        <begin position="280"/>
        <end position="289"/>
    </location>
</feature>
<feature type="disulfide bond" evidence="1">
    <location>
        <begin position="318"/>
        <end position="337"/>
    </location>
</feature>
<feature type="disulfide bond" evidence="1">
    <location>
        <begin position="421"/>
        <end position="447"/>
    </location>
</feature>
<feature type="sequence conflict" description="In Ref. 2; BAD16638." ref="2">
    <original>Q</original>
    <variation>H</variation>
    <location>
        <position position="226"/>
    </location>
</feature>
<name>NRAM_I57A5</name>
<evidence type="ECO:0000255" key="1">
    <source>
        <dbReference type="HAMAP-Rule" id="MF_04071"/>
    </source>
</evidence>
<evidence type="ECO:0000256" key="2">
    <source>
        <dbReference type="SAM" id="MobiDB-lite"/>
    </source>
</evidence>
<organism>
    <name type="scientific">Influenza A virus (strain A/Singapore/1/1957 H2N2)</name>
    <dbReference type="NCBI Taxonomy" id="382781"/>
    <lineage>
        <taxon>Viruses</taxon>
        <taxon>Riboviria</taxon>
        <taxon>Orthornavirae</taxon>
        <taxon>Negarnaviricota</taxon>
        <taxon>Polyploviricotina</taxon>
        <taxon>Insthoviricetes</taxon>
        <taxon>Articulavirales</taxon>
        <taxon>Orthomyxoviridae</taxon>
        <taxon>Alphainfluenzavirus</taxon>
        <taxon>Alphainfluenzavirus influenzae</taxon>
        <taxon>Influenza A virus</taxon>
    </lineage>
</organism>
<comment type="function">
    <text evidence="1">Catalyzes the removal of terminal sialic acid residues from viral and cellular glycoconjugates. Cleaves off the terminal sialic acids on the glycosylated HA during virus budding to facilitate virus release. Additionally helps virus spread through the circulation by further removing sialic acids from the cell surface. These cleavages prevent self-aggregation and ensure the efficient spread of the progeny virus from cell to cell. Otherwise, infection would be limited to one round of replication. Described as a receptor-destroying enzyme because it cleaves a terminal sialic acid from the cellular receptors. May facilitate viral invasion of the upper airways by cleaving the sialic acid moieties on the mucin of the airway epithelial cells. Likely to plays a role in the budding process through its association with lipid rafts during intracellular transport. May additionally display a raft-association independent effect on budding. Plays a role in the determination of host range restriction on replication and virulence. Sialidase activity in late endosome/lysosome traffic seems to enhance virus replication.</text>
</comment>
<comment type="catalytic activity">
    <reaction evidence="1">
        <text>Hydrolysis of alpha-(2-&gt;3)-, alpha-(2-&gt;6)-, alpha-(2-&gt;8)- glycosidic linkages of terminal sialic acid residues in oligosaccharides, glycoproteins, glycolipids, colominic acid and synthetic substrates.</text>
        <dbReference type="EC" id="3.2.1.18"/>
    </reaction>
</comment>
<comment type="cofactor">
    <cofactor evidence="1">
        <name>Ca(2+)</name>
        <dbReference type="ChEBI" id="CHEBI:29108"/>
    </cofactor>
</comment>
<comment type="activity regulation">
    <text evidence="1">Inhibited by the neuraminidase inhibitors zanamivir (Relenza) and oseltamivir (Tamiflu). These drugs interfere with the release of progeny virus from infected cells and are effective against all influenza strains. Resistance to neuraminidase inhibitors is quite rare.</text>
</comment>
<comment type="subunit">
    <text evidence="1">Homotetramer.</text>
</comment>
<comment type="subcellular location">
    <subcellularLocation>
        <location evidence="1">Virion membrane</location>
    </subcellularLocation>
    <subcellularLocation>
        <location evidence="1">Host apical cell membrane</location>
        <topology evidence="1">Single-pass type II membrane protein</topology>
    </subcellularLocation>
    <text evidence="1">Preferentially accumulates at the apical plasma membrane in infected polarized epithelial cells, which is the virus assembly site. Uses lipid rafts for cell surface transport and apical sorting. In the virion, forms a mushroom-shaped spike on the surface of the membrane.</text>
</comment>
<comment type="domain">
    <text evidence="1">Intact N-terminus is essential for virion morphogenesis. Possesses two apical sorting signals, one in the ectodomain, which is likely to be a glycan, and the other in the transmembrane domain. The transmembrane domain also plays a role in lipid raft association.</text>
</comment>
<comment type="PTM">
    <text evidence="1">N-glycosylated.</text>
</comment>
<comment type="miscellaneous">
    <text>The influenza A genome consist of 8 RNA segments. Genetic variation of hemagglutinin and/or neuraminidase genes results in the emergence of new influenza strains. The mechanism of variation can be the result of point mutations or the result of genetic reassortment between segments of two different strains.</text>
</comment>
<comment type="similarity">
    <text evidence="1">Belongs to the glycosyl hydrolase 34 family.</text>
</comment>
<proteinExistence type="inferred from homology"/>
<sequence length="469" mass="52003">MNPNQKIITIGSVSLTIATVCFLMQIAILATTVTLHFKQHECDSPASNQVMPCEPIIIERNITEIVYLNNTTIEKEICPEVVEYRNWSKPQCQITGFAPFSKDNSIRLSAGGDIWVTREPYVSCDPGKCYQFALGQGTTLDNKHSNGTIHDRIPHRTLLMNELGVPFHLGTKQVCVAWSSSSCHDGKAWLHVCVTGDDRNATASFIYDGRLVDSIGSWSQNILRTQESECVCINGTCTVVMTDGSASGRADTRILFIKEGKIVHISPLSGSAQHIEECSCYPRYPDVRCICRDNWKGSNRPVIDINMEDYSIDSSYVCSGLVGDTPRNDDSSSNSNCRDPNNERGNPGVKGWAFDNGDDVWMGRTINKDSRSGYETFKVIGGWSTPNSKSQVNRQVIVDNNNWSGYSGIFSVEGKSCINRCFYVELIRGRPQETRVWWTSNSIVVFCGTSGTYGTGSWPDGANINFMPI</sequence>
<keyword id="KW-0106">Calcium</keyword>
<keyword id="KW-1015">Disulfide bond</keyword>
<keyword id="KW-0325">Glycoprotein</keyword>
<keyword id="KW-0326">Glycosidase</keyword>
<keyword id="KW-1032">Host cell membrane</keyword>
<keyword id="KW-1043">Host membrane</keyword>
<keyword id="KW-0378">Hydrolase</keyword>
<keyword id="KW-0472">Membrane</keyword>
<keyword id="KW-0479">Metal-binding</keyword>
<keyword id="KW-0735">Signal-anchor</keyword>
<keyword id="KW-0812">Transmembrane</keyword>
<keyword id="KW-1133">Transmembrane helix</keyword>
<keyword id="KW-0946">Virion</keyword>
<accession>Q6XUE4</accession>
<accession>Q75VQ8</accession>